<protein>
    <recommendedName>
        <fullName evidence="1">Glutathione-regulated potassium-efflux system ancillary protein KefF</fullName>
    </recommendedName>
    <alternativeName>
        <fullName evidence="1">Quinone oxidoreductase KefF</fullName>
        <ecNumber evidence="1">1.6.5.2</ecNumber>
    </alternativeName>
</protein>
<name>KEFF_SALG2</name>
<dbReference type="EC" id="1.6.5.2" evidence="1"/>
<dbReference type="EMBL" id="AM933173">
    <property type="protein sequence ID" value="CAR35994.1"/>
    <property type="molecule type" value="Genomic_DNA"/>
</dbReference>
<dbReference type="RefSeq" id="WP_000600694.1">
    <property type="nucleotide sequence ID" value="NC_011274.1"/>
</dbReference>
<dbReference type="SMR" id="B5RGB7"/>
<dbReference type="KEGG" id="seg:SG0087"/>
<dbReference type="HOGENOM" id="CLU_058643_0_2_6"/>
<dbReference type="Proteomes" id="UP000008321">
    <property type="component" value="Chromosome"/>
</dbReference>
<dbReference type="GO" id="GO:0005886">
    <property type="term" value="C:plasma membrane"/>
    <property type="evidence" value="ECO:0007669"/>
    <property type="project" value="UniProtKB-SubCell"/>
</dbReference>
<dbReference type="GO" id="GO:0009055">
    <property type="term" value="F:electron transfer activity"/>
    <property type="evidence" value="ECO:0007669"/>
    <property type="project" value="TreeGrafter"/>
</dbReference>
<dbReference type="GO" id="GO:0010181">
    <property type="term" value="F:FMN binding"/>
    <property type="evidence" value="ECO:0007669"/>
    <property type="project" value="UniProtKB-UniRule"/>
</dbReference>
<dbReference type="GO" id="GO:0050136">
    <property type="term" value="F:NADH:ubiquinone reductase (non-electrogenic) activity"/>
    <property type="evidence" value="ECO:0007669"/>
    <property type="project" value="RHEA"/>
</dbReference>
<dbReference type="GO" id="GO:0008753">
    <property type="term" value="F:NADPH dehydrogenase (quinone) activity"/>
    <property type="evidence" value="ECO:0007669"/>
    <property type="project" value="RHEA"/>
</dbReference>
<dbReference type="GO" id="GO:1901381">
    <property type="term" value="P:positive regulation of potassium ion transmembrane transport"/>
    <property type="evidence" value="ECO:0007669"/>
    <property type="project" value="UniProtKB-UniRule"/>
</dbReference>
<dbReference type="GO" id="GO:0006813">
    <property type="term" value="P:potassium ion transport"/>
    <property type="evidence" value="ECO:0007669"/>
    <property type="project" value="InterPro"/>
</dbReference>
<dbReference type="Gene3D" id="3.40.50.360">
    <property type="match status" value="1"/>
</dbReference>
<dbReference type="HAMAP" id="MF_01414">
    <property type="entry name" value="K_H_efflux_KefF"/>
    <property type="match status" value="1"/>
</dbReference>
<dbReference type="InterPro" id="IPR003680">
    <property type="entry name" value="Flavodoxin_fold"/>
</dbReference>
<dbReference type="InterPro" id="IPR029039">
    <property type="entry name" value="Flavoprotein-like_sf"/>
</dbReference>
<dbReference type="InterPro" id="IPR023948">
    <property type="entry name" value="K_H_efflux_KefF"/>
</dbReference>
<dbReference type="InterPro" id="IPR046980">
    <property type="entry name" value="KefG/KefF"/>
</dbReference>
<dbReference type="NCBIfam" id="NF002044">
    <property type="entry name" value="PRK00871.1"/>
    <property type="match status" value="1"/>
</dbReference>
<dbReference type="PANTHER" id="PTHR47307:SF2">
    <property type="entry name" value="GLUTATHIONE-REGULATED POTASSIUM-EFFLUX SYSTEM ANCILLARY PROTEIN KEFF"/>
    <property type="match status" value="1"/>
</dbReference>
<dbReference type="PANTHER" id="PTHR47307">
    <property type="entry name" value="GLUTATHIONE-REGULATED POTASSIUM-EFFLUX SYSTEM ANCILLARY PROTEIN KEFG"/>
    <property type="match status" value="1"/>
</dbReference>
<dbReference type="Pfam" id="PF02525">
    <property type="entry name" value="Flavodoxin_2"/>
    <property type="match status" value="1"/>
</dbReference>
<dbReference type="SUPFAM" id="SSF52218">
    <property type="entry name" value="Flavoproteins"/>
    <property type="match status" value="1"/>
</dbReference>
<feature type="chain" id="PRO_1000145566" description="Glutathione-regulated potassium-efflux system ancillary protein KefF">
    <location>
        <begin position="1"/>
        <end position="176"/>
    </location>
</feature>
<feature type="binding site" evidence="1">
    <location>
        <position position="8"/>
    </location>
    <ligand>
        <name>FMN</name>
        <dbReference type="ChEBI" id="CHEBI:58210"/>
    </ligand>
</feature>
<feature type="binding site" evidence="1">
    <location>
        <begin position="14"/>
        <end position="17"/>
    </location>
    <ligand>
        <name>FMN</name>
        <dbReference type="ChEBI" id="CHEBI:58210"/>
    </ligand>
</feature>
<feature type="binding site" evidence="1">
    <location>
        <begin position="65"/>
        <end position="68"/>
    </location>
    <ligand>
        <name>FMN</name>
        <dbReference type="ChEBI" id="CHEBI:58210"/>
    </ligand>
</feature>
<feature type="binding site" evidence="1">
    <location>
        <begin position="105"/>
        <end position="108"/>
    </location>
    <ligand>
        <name>FMN</name>
        <dbReference type="ChEBI" id="CHEBI:58210"/>
    </ligand>
</feature>
<keyword id="KW-0997">Cell inner membrane</keyword>
<keyword id="KW-1003">Cell membrane</keyword>
<keyword id="KW-0285">Flavoprotein</keyword>
<keyword id="KW-0288">FMN</keyword>
<keyword id="KW-0472">Membrane</keyword>
<keyword id="KW-0520">NAD</keyword>
<keyword id="KW-0560">Oxidoreductase</keyword>
<proteinExistence type="inferred from homology"/>
<gene>
    <name evidence="1" type="primary">kefF</name>
    <name type="ordered locus">SG0087</name>
</gene>
<sequence length="176" mass="20031">MILIIYAHPYPHHSHANKQMLEQAGTLENVEIRSLYHLYPDFNIDVAAEQEALSRASLIVWQHPMQWYSVPPLLKLWMDKALTHGWAYGHGGTALHGKYLLWAVTTGGGENHFTIGSHPGFDVLSQPLQATALYCGLKWLPPFSMHCTFICDDDTLQAQARQYKQRLLAWQEVNHG</sequence>
<evidence type="ECO:0000255" key="1">
    <source>
        <dbReference type="HAMAP-Rule" id="MF_01414"/>
    </source>
</evidence>
<organism>
    <name type="scientific">Salmonella gallinarum (strain 287/91 / NCTC 13346)</name>
    <dbReference type="NCBI Taxonomy" id="550538"/>
    <lineage>
        <taxon>Bacteria</taxon>
        <taxon>Pseudomonadati</taxon>
        <taxon>Pseudomonadota</taxon>
        <taxon>Gammaproteobacteria</taxon>
        <taxon>Enterobacterales</taxon>
        <taxon>Enterobacteriaceae</taxon>
        <taxon>Salmonella</taxon>
    </lineage>
</organism>
<comment type="function">
    <text evidence="1">Regulatory subunit of a potassium efflux system that confers protection against electrophiles. Required for full activity of KefC. Shows redox enzymatic activity, but this enzymatic activity is not required for activation of KefC.</text>
</comment>
<comment type="catalytic activity">
    <reaction evidence="1">
        <text>a quinone + NADH + H(+) = a quinol + NAD(+)</text>
        <dbReference type="Rhea" id="RHEA:46160"/>
        <dbReference type="ChEBI" id="CHEBI:15378"/>
        <dbReference type="ChEBI" id="CHEBI:24646"/>
        <dbReference type="ChEBI" id="CHEBI:57540"/>
        <dbReference type="ChEBI" id="CHEBI:57945"/>
        <dbReference type="ChEBI" id="CHEBI:132124"/>
        <dbReference type="EC" id="1.6.5.2"/>
    </reaction>
</comment>
<comment type="catalytic activity">
    <reaction evidence="1">
        <text>a quinone + NADPH + H(+) = a quinol + NADP(+)</text>
        <dbReference type="Rhea" id="RHEA:46164"/>
        <dbReference type="ChEBI" id="CHEBI:15378"/>
        <dbReference type="ChEBI" id="CHEBI:24646"/>
        <dbReference type="ChEBI" id="CHEBI:57783"/>
        <dbReference type="ChEBI" id="CHEBI:58349"/>
        <dbReference type="ChEBI" id="CHEBI:132124"/>
        <dbReference type="EC" id="1.6.5.2"/>
    </reaction>
</comment>
<comment type="cofactor">
    <cofactor evidence="1">
        <name>FMN</name>
        <dbReference type="ChEBI" id="CHEBI:58210"/>
    </cofactor>
</comment>
<comment type="subunit">
    <text evidence="1">Homodimer. Interacts with KefC.</text>
</comment>
<comment type="subcellular location">
    <subcellularLocation>
        <location evidence="1">Cell inner membrane</location>
        <topology evidence="1">Peripheral membrane protein</topology>
        <orientation evidence="1">Cytoplasmic side</orientation>
    </subcellularLocation>
</comment>
<comment type="similarity">
    <text evidence="1">Belongs to the NAD(P)H dehydrogenase (quinone) family. KefF subfamily.</text>
</comment>
<reference key="1">
    <citation type="journal article" date="2008" name="Genome Res.">
        <title>Comparative genome analysis of Salmonella enteritidis PT4 and Salmonella gallinarum 287/91 provides insights into evolutionary and host adaptation pathways.</title>
        <authorList>
            <person name="Thomson N.R."/>
            <person name="Clayton D.J."/>
            <person name="Windhorst D."/>
            <person name="Vernikos G."/>
            <person name="Davidson S."/>
            <person name="Churcher C."/>
            <person name="Quail M.A."/>
            <person name="Stevens M."/>
            <person name="Jones M.A."/>
            <person name="Watson M."/>
            <person name="Barron A."/>
            <person name="Layton A."/>
            <person name="Pickard D."/>
            <person name="Kingsley R.A."/>
            <person name="Bignell A."/>
            <person name="Clark L."/>
            <person name="Harris B."/>
            <person name="Ormond D."/>
            <person name="Abdellah Z."/>
            <person name="Brooks K."/>
            <person name="Cherevach I."/>
            <person name="Chillingworth T."/>
            <person name="Woodward J."/>
            <person name="Norberczak H."/>
            <person name="Lord A."/>
            <person name="Arrowsmith C."/>
            <person name="Jagels K."/>
            <person name="Moule S."/>
            <person name="Mungall K."/>
            <person name="Saunders M."/>
            <person name="Whitehead S."/>
            <person name="Chabalgoity J.A."/>
            <person name="Maskell D."/>
            <person name="Humphreys T."/>
            <person name="Roberts M."/>
            <person name="Barrow P.A."/>
            <person name="Dougan G."/>
            <person name="Parkhill J."/>
        </authorList>
    </citation>
    <scope>NUCLEOTIDE SEQUENCE [LARGE SCALE GENOMIC DNA]</scope>
    <source>
        <strain>287/91 / NCTC 13346</strain>
    </source>
</reference>
<accession>B5RGB7</accession>